<name>MPG_NEIMB</name>
<organism evidence="9 10">
    <name type="scientific">Neisseria meningitidis serogroup B (strain ATCC BAA-335 / MC58)</name>
    <dbReference type="NCBI Taxonomy" id="122586"/>
    <lineage>
        <taxon>Bacteria</taxon>
        <taxon>Pseudomonadati</taxon>
        <taxon>Pseudomonadota</taxon>
        <taxon>Betaproteobacteria</taxon>
        <taxon>Neisseriales</taxon>
        <taxon>Neisseriaceae</taxon>
        <taxon>Neisseria</taxon>
    </lineage>
</organism>
<sequence>MAVFPLSAKHRKYALRALAVSIILVSAAYIASTERTERVRPQRVEQNLPPLSWGGSGVQTAYWVQEAVQPGDSLADVLARSGMARDEIARITEKYGGEADLRHLRADQSVHVLVGGDGGAREVQFFTDEDGERNLVALEKKGGIWRRSASEADMKVLPTLRSVVVKTSARGSLARAEVPVEIRESLSGIFAGRFSLDGLKEGDAVRLMYDSLYFHGQQVAAGDILAAEVVKGGTRHQAFYYRSDKEGGGGGNYYDEDGKVLQEKGGFNIEPLVYTRISSPFGYRMHPILHTWRLHTGIDYAAPQGTPVRASADGVITFKGRKGGYGNAVMIRHANGVETLYAHLSAFSQAEGNVRGGEVIGFVGSTGRSTGPHLHYEARINGQPVNPVSVALPTPELTQADKAAFAAQKQKADALLARLRGIPVTVSQSD</sequence>
<accession>Q9K163</accession>
<feature type="propeptide" id="PRO_0000461675" description="Removed in mature form" evidence="1">
    <location>
        <begin position="1"/>
        <end status="unknown"/>
    </location>
</feature>
<feature type="chain" id="PRO_0000461676" description="DD-carboxypeptidase/endopeptidase Mpg">
    <location>
        <begin status="unknown"/>
        <end position="430"/>
    </location>
</feature>
<feature type="binding site" evidence="1">
    <location>
        <position position="295"/>
    </location>
    <ligand>
        <name>Zn(2+)</name>
        <dbReference type="ChEBI" id="CHEBI:29105"/>
        <note>catalytic</note>
    </ligand>
</feature>
<feature type="binding site" evidence="1">
    <location>
        <position position="299"/>
    </location>
    <ligand>
        <name>Zn(2+)</name>
        <dbReference type="ChEBI" id="CHEBI:29105"/>
        <note>catalytic</note>
    </ligand>
</feature>
<feature type="binding site" evidence="1">
    <location>
        <position position="375"/>
    </location>
    <ligand>
        <name>Zn(2+)</name>
        <dbReference type="ChEBI" id="CHEBI:29105"/>
        <note>catalytic</note>
    </ligand>
</feature>
<gene>
    <name evidence="5 6 9" type="ordered locus">NMB0315</name>
</gene>
<comment type="function">
    <text evidence="2">Has both endopeptidase and DD-carboxypeptidase activities. Degrades cell wall peptidoglycan (PG) to allow consummate expression of pili.</text>
</comment>
<comment type="cofactor">
    <cofactor evidence="1">
        <name>Zn(2+)</name>
        <dbReference type="ChEBI" id="CHEBI:29105"/>
    </cofactor>
    <text evidence="1">Binds 1 zinc ion per subunit.</text>
</comment>
<comment type="subunit">
    <text evidence="1">Monomer.</text>
</comment>
<comment type="subcellular location">
    <subcellularLocation>
        <location evidence="8">Cell outer membrane</location>
    </subcellularLocation>
    <text evidence="8">There is a signal or a transmembrane region in the N-terminus of the pre-protein (Probable). Mature protein is probably associated with the cell outer membrane (PubMed:33548582).</text>
</comment>
<comment type="PTM">
    <text evidence="1">Likely to be synthesized as a proenzyme. The cleavage of the N-terminal domain is probably required for the activation of the enzyme.</text>
</comment>
<comment type="biotechnology">
    <text evidence="3 4">Potentially a good vaccine candidate against N.meningitidis serogroup B (NMB) infections (PubMed:29257302, PubMed:33548582). Immunostimulators, namely cationic compound 48/80 (C48/80) or negatively charged cytosine-phosphodiester-guanine oligodeoxynucleotide (CpG-ODN), incorporated into chitosan nanoparticles (Chi NP) enhance the immunogenicity of this protein when administered together via intranasal mucosa of mice (PubMed:33548582). By using these combination adjuvants, NMB0315 protein-specific serum IgG, IgG1 and IgG2a, and nasal and vaginal secreted IgA (sIgA) antibodies are increased as well as higher levels of interleukin 4 (IL-4), interferon-gamma (IFN-gamma) and interleukin 17A (IL-17A) are secreted by the splenocytes (PubMed:33548582). Both the parenteral immunization with NMB0315 gene-containing plasmid DNA + CpG vaccine and the intranasal immunization with recombinant NMB0315 protein with combination adjuvants result in considerably high titer of bactericidal antibodies against NMB in the serum of the mice and a high survival rate of mice after a intraperitoneal challenge with lethal dose of NMB strain MC58 bacteria (PubMed:29257302, PubMed:33548582).</text>
</comment>
<comment type="similarity">
    <text evidence="7">Belongs to the peptidase M23B family.</text>
</comment>
<protein>
    <recommendedName>
        <fullName evidence="7">DD-carboxypeptidase/endopeptidase Mpg</fullName>
        <ecNumber evidence="2">3.4.17.-</ecNumber>
        <ecNumber evidence="2">3.4.24.-</ecNumber>
    </recommendedName>
    <alternativeName>
        <fullName evidence="2">Metalloprotease active against peptidoglycan</fullName>
    </alternativeName>
    <alternativeName>
        <fullName evidence="5 6">Outer membrane protein 0315</fullName>
        <shortName evidence="6">OMP 0315</shortName>
    </alternativeName>
    <alternativeName>
        <fullName evidence="7">Zinc metallopeptidase</fullName>
    </alternativeName>
    <alternativeName>
        <fullName evidence="7">Zinc metalloprotease</fullName>
    </alternativeName>
    <alternativeName>
        <fullName evidence="7">Zinc-dependent metallopeptidase</fullName>
    </alternativeName>
</protein>
<proteinExistence type="evidence at protein level"/>
<keyword id="KW-0998">Cell outer membrane</keyword>
<keyword id="KW-0961">Cell wall biogenesis/degradation</keyword>
<keyword id="KW-1029">Fimbrium biogenesis</keyword>
<keyword id="KW-0378">Hydrolase</keyword>
<keyword id="KW-0472">Membrane</keyword>
<keyword id="KW-0479">Metal-binding</keyword>
<keyword id="KW-0482">Metalloprotease</keyword>
<keyword id="KW-0645">Protease</keyword>
<keyword id="KW-1185">Reference proteome</keyword>
<keyword id="KW-0862">Zinc</keyword>
<keyword id="KW-0865">Zymogen</keyword>
<dbReference type="EC" id="3.4.17.-" evidence="2"/>
<dbReference type="EC" id="3.4.24.-" evidence="2"/>
<dbReference type="EMBL" id="AE002098">
    <property type="protein sequence ID" value="AAF40760.1"/>
    <property type="molecule type" value="Genomic_DNA"/>
</dbReference>
<dbReference type="PIR" id="A81214">
    <property type="entry name" value="A81214"/>
</dbReference>
<dbReference type="RefSeq" id="NP_273364.1">
    <property type="nucleotide sequence ID" value="NC_003112.2"/>
</dbReference>
<dbReference type="RefSeq" id="WP_002224862.1">
    <property type="nucleotide sequence ID" value="NC_003112.2"/>
</dbReference>
<dbReference type="SMR" id="Q9K163"/>
<dbReference type="FunCoup" id="Q9K163">
    <property type="interactions" value="74"/>
</dbReference>
<dbReference type="STRING" id="122586.NMB0315"/>
<dbReference type="MEROPS" id="M23.009"/>
<dbReference type="PaxDb" id="122586-NMB0315"/>
<dbReference type="DNASU" id="902431"/>
<dbReference type="KEGG" id="nme:NMB0315"/>
<dbReference type="PATRIC" id="fig|122586.8.peg.399"/>
<dbReference type="HOGENOM" id="CLU_026846_4_1_4"/>
<dbReference type="InParanoid" id="Q9K163"/>
<dbReference type="OrthoDB" id="9815245at2"/>
<dbReference type="Proteomes" id="UP000000425">
    <property type="component" value="Chromosome"/>
</dbReference>
<dbReference type="GO" id="GO:0009279">
    <property type="term" value="C:cell outer membrane"/>
    <property type="evidence" value="ECO:0007669"/>
    <property type="project" value="UniProtKB-SubCell"/>
</dbReference>
<dbReference type="GO" id="GO:0046872">
    <property type="term" value="F:metal ion binding"/>
    <property type="evidence" value="ECO:0007669"/>
    <property type="project" value="UniProtKB-KW"/>
</dbReference>
<dbReference type="GO" id="GO:0004222">
    <property type="term" value="F:metalloendopeptidase activity"/>
    <property type="evidence" value="ECO:0000318"/>
    <property type="project" value="GO_Central"/>
</dbReference>
<dbReference type="GO" id="GO:0071555">
    <property type="term" value="P:cell wall organization"/>
    <property type="evidence" value="ECO:0007669"/>
    <property type="project" value="UniProtKB-KW"/>
</dbReference>
<dbReference type="GO" id="GO:0006508">
    <property type="term" value="P:proteolysis"/>
    <property type="evidence" value="ECO:0007669"/>
    <property type="project" value="UniProtKB-KW"/>
</dbReference>
<dbReference type="CDD" id="cd12797">
    <property type="entry name" value="M23_peptidase"/>
    <property type="match status" value="1"/>
</dbReference>
<dbReference type="FunFam" id="2.70.70.10:FF:000002">
    <property type="entry name" value="Murein DD-endopeptidase MepM"/>
    <property type="match status" value="1"/>
</dbReference>
<dbReference type="Gene3D" id="3.10.450.350">
    <property type="match status" value="2"/>
</dbReference>
<dbReference type="Gene3D" id="2.70.70.10">
    <property type="entry name" value="Glucose Permease (Domain IIA)"/>
    <property type="match status" value="1"/>
</dbReference>
<dbReference type="InterPro" id="IPR050570">
    <property type="entry name" value="Cell_wall_metabolism_enzyme"/>
</dbReference>
<dbReference type="InterPro" id="IPR011055">
    <property type="entry name" value="Dup_hybrid_motif"/>
</dbReference>
<dbReference type="InterPro" id="IPR054512">
    <property type="entry name" value="NMB0315-like_N"/>
</dbReference>
<dbReference type="InterPro" id="IPR016047">
    <property type="entry name" value="Peptidase_M23"/>
</dbReference>
<dbReference type="PANTHER" id="PTHR21666:SF288">
    <property type="entry name" value="CELL DIVISION PROTEIN YTFB"/>
    <property type="match status" value="1"/>
</dbReference>
<dbReference type="PANTHER" id="PTHR21666">
    <property type="entry name" value="PEPTIDASE-RELATED"/>
    <property type="match status" value="1"/>
</dbReference>
<dbReference type="Pfam" id="PF22310">
    <property type="entry name" value="NMB0315_dom_I"/>
    <property type="match status" value="1"/>
</dbReference>
<dbReference type="Pfam" id="PF01551">
    <property type="entry name" value="Peptidase_M23"/>
    <property type="match status" value="1"/>
</dbReference>
<dbReference type="SUPFAM" id="SSF51261">
    <property type="entry name" value="Duplicated hybrid motif"/>
    <property type="match status" value="1"/>
</dbReference>
<reference evidence="9 10" key="1">
    <citation type="journal article" date="2000" name="Science">
        <title>Complete genome sequence of Neisseria meningitidis serogroup B strain MC58.</title>
        <authorList>
            <person name="Tettelin H."/>
            <person name="Saunders N.J."/>
            <person name="Heidelberg J.F."/>
            <person name="Jeffries A.C."/>
            <person name="Nelson K.E."/>
            <person name="Eisen J.A."/>
            <person name="Ketchum K.A."/>
            <person name="Hood D.W."/>
            <person name="Peden J.F."/>
            <person name="Dodson R.J."/>
            <person name="Nelson W.C."/>
            <person name="Gwinn M.L."/>
            <person name="DeBoy R.T."/>
            <person name="Peterson J.D."/>
            <person name="Hickey E.K."/>
            <person name="Haft D.H."/>
            <person name="Salzberg S.L."/>
            <person name="White O."/>
            <person name="Fleischmann R.D."/>
            <person name="Dougherty B.A."/>
            <person name="Mason T.M."/>
            <person name="Ciecko A."/>
            <person name="Parksey D.S."/>
            <person name="Blair E."/>
            <person name="Cittone H."/>
            <person name="Clark E.B."/>
            <person name="Cotton M.D."/>
            <person name="Utterback T.R."/>
            <person name="Khouri H.M."/>
            <person name="Qin H."/>
            <person name="Vamathevan J.J."/>
            <person name="Gill J."/>
            <person name="Scarlato V."/>
            <person name="Masignani V."/>
            <person name="Pizza M."/>
            <person name="Grandi G."/>
            <person name="Sun L."/>
            <person name="Smith H.O."/>
            <person name="Fraser C.M."/>
            <person name="Moxon E.R."/>
            <person name="Rappuoli R."/>
            <person name="Venter J.C."/>
        </authorList>
    </citation>
    <scope>NUCLEOTIDE SEQUENCE [LARGE SCALE GENOMIC DNA]</scope>
    <source>
        <strain evidence="9 10">ATCC BAA-335 / MC58</strain>
    </source>
</reference>
<reference key="2">
    <citation type="journal article" date="2018" name="Mol. Med. Report.">
        <title>Construction and protective immunogenicity of DNA vaccine pNMB0315 against Neisseria meningitidis serogroup B.</title>
        <authorList>
            <person name="Wu X."/>
            <person name="Li K."/>
            <person name="Xie M."/>
            <person name="Yu M."/>
            <person name="Tang S."/>
            <person name="Li Z."/>
            <person name="Hu S."/>
        </authorList>
    </citation>
    <scope>BIOTECHNOLOGY</scope>
    <source>
        <strain evidence="5">ATCC BAA-335 / MC58</strain>
    </source>
</reference>
<reference key="3">
    <citation type="journal article" date="2021" name="Int. Immunopharmacol.">
        <title>Intranasal immunization with a rNMB0315 and combination adjuvants induces protective immunity against Neisseria meningitidis serogroup B in mice.</title>
        <authorList>
            <person name="Li Z."/>
            <person name="Li Y."/>
            <person name="Wang Y."/>
            <person name="Hou Y."/>
            <person name="Cao H."/>
            <person name="Wu X."/>
            <person name="Hu S."/>
            <person name="Long D."/>
        </authorList>
    </citation>
    <scope>SUBCELLULAR LOCATION</scope>
    <scope>BIOTECHNOLOGY</scope>
    <source>
        <strain evidence="6">ATCC BAA-335 / MC58</strain>
    </source>
</reference>
<evidence type="ECO:0000250" key="1">
    <source>
        <dbReference type="UniProtKB" id="E0N688"/>
    </source>
</evidence>
<evidence type="ECO:0000250" key="2">
    <source>
        <dbReference type="UniProtKB" id="Q5F676"/>
    </source>
</evidence>
<evidence type="ECO:0000269" key="3">
    <source>
    </source>
</evidence>
<evidence type="ECO:0000269" key="4">
    <source>
    </source>
</evidence>
<evidence type="ECO:0000303" key="5">
    <source>
    </source>
</evidence>
<evidence type="ECO:0000303" key="6">
    <source>
    </source>
</evidence>
<evidence type="ECO:0000305" key="7"/>
<evidence type="ECO:0000305" key="8">
    <source>
    </source>
</evidence>
<evidence type="ECO:0000312" key="9">
    <source>
        <dbReference type="EMBL" id="AAF40760.1"/>
    </source>
</evidence>
<evidence type="ECO:0000312" key="10">
    <source>
        <dbReference type="Proteomes" id="UP000000425"/>
    </source>
</evidence>